<dbReference type="EMBL" id="U18796">
    <property type="protein sequence ID" value="AAB64570.1"/>
    <property type="molecule type" value="Genomic_DNA"/>
</dbReference>
<dbReference type="EMBL" id="AY558451">
    <property type="protein sequence ID" value="AAS56777.1"/>
    <property type="molecule type" value="Genomic_DNA"/>
</dbReference>
<dbReference type="EMBL" id="BK006939">
    <property type="protein sequence ID" value="DAA07688.1"/>
    <property type="molecule type" value="Genomic_DNA"/>
</dbReference>
<dbReference type="PIR" id="S50538">
    <property type="entry name" value="S50538"/>
</dbReference>
<dbReference type="RefSeq" id="NP_010952.3">
    <property type="nucleotide sequence ID" value="NM_001178926.3"/>
</dbReference>
<dbReference type="BioGRID" id="36770">
    <property type="interactions" value="68"/>
</dbReference>
<dbReference type="DIP" id="DIP-5234N"/>
<dbReference type="FunCoup" id="P40023">
    <property type="interactions" value="172"/>
</dbReference>
<dbReference type="IntAct" id="P40023">
    <property type="interactions" value="7"/>
</dbReference>
<dbReference type="MINT" id="P40023"/>
<dbReference type="STRING" id="4932.YER035W"/>
<dbReference type="iPTMnet" id="P40023"/>
<dbReference type="PaxDb" id="4932-YER035W"/>
<dbReference type="PeptideAtlas" id="P40023"/>
<dbReference type="EnsemblFungi" id="YER035W_mRNA">
    <property type="protein sequence ID" value="YER035W"/>
    <property type="gene ID" value="YER035W"/>
</dbReference>
<dbReference type="GeneID" id="856757"/>
<dbReference type="KEGG" id="sce:YER035W"/>
<dbReference type="AGR" id="SGD:S000000837"/>
<dbReference type="SGD" id="S000000837">
    <property type="gene designation" value="EDC2"/>
</dbReference>
<dbReference type="VEuPathDB" id="FungiDB:YER035W"/>
<dbReference type="HOGENOM" id="CLU_1797570_0_0_1"/>
<dbReference type="InParanoid" id="P40023"/>
<dbReference type="OMA" id="PSAKEHM"/>
<dbReference type="OrthoDB" id="4063475at2759"/>
<dbReference type="BioCyc" id="YEAST:G3O-30216-MONOMER"/>
<dbReference type="BioGRID-ORCS" id="856757">
    <property type="hits" value="1 hit in 10 CRISPR screens"/>
</dbReference>
<dbReference type="PRO" id="PR:P40023"/>
<dbReference type="Proteomes" id="UP000002311">
    <property type="component" value="Chromosome V"/>
</dbReference>
<dbReference type="RNAct" id="P40023">
    <property type="molecule type" value="protein"/>
</dbReference>
<dbReference type="GO" id="GO:0005737">
    <property type="term" value="C:cytoplasm"/>
    <property type="evidence" value="ECO:0007005"/>
    <property type="project" value="SGD"/>
</dbReference>
<dbReference type="GO" id="GO:0005730">
    <property type="term" value="C:nucleolus"/>
    <property type="evidence" value="ECO:0000314"/>
    <property type="project" value="SGD"/>
</dbReference>
<dbReference type="GO" id="GO:0005634">
    <property type="term" value="C:nucleus"/>
    <property type="evidence" value="ECO:0000314"/>
    <property type="project" value="SGD"/>
</dbReference>
<dbReference type="GO" id="GO:0003729">
    <property type="term" value="F:mRNA binding"/>
    <property type="evidence" value="ECO:0000314"/>
    <property type="project" value="SGD"/>
</dbReference>
<dbReference type="GO" id="GO:0000290">
    <property type="term" value="P:deadenylation-dependent decapping of nuclear-transcribed mRNA"/>
    <property type="evidence" value="ECO:0000314"/>
    <property type="project" value="SGD"/>
</dbReference>
<dbReference type="GO" id="GO:0006397">
    <property type="term" value="P:mRNA processing"/>
    <property type="evidence" value="ECO:0007669"/>
    <property type="project" value="UniProtKB-KW"/>
</dbReference>
<dbReference type="GO" id="GO:0000184">
    <property type="term" value="P:nuclear-transcribed mRNA catabolic process, nonsense-mediated decay"/>
    <property type="evidence" value="ECO:0007669"/>
    <property type="project" value="UniProtKB-KW"/>
</dbReference>
<dbReference type="GO" id="GO:0032056">
    <property type="term" value="P:positive regulation of translation in response to stress"/>
    <property type="evidence" value="ECO:0000315"/>
    <property type="project" value="SGD"/>
</dbReference>
<dbReference type="InterPro" id="IPR028322">
    <property type="entry name" value="PNRC-like_rgn"/>
</dbReference>
<dbReference type="Pfam" id="PF15365">
    <property type="entry name" value="PNRC"/>
    <property type="match status" value="1"/>
</dbReference>
<evidence type="ECO:0000256" key="1">
    <source>
        <dbReference type="SAM" id="MobiDB-lite"/>
    </source>
</evidence>
<evidence type="ECO:0000269" key="2">
    <source>
    </source>
</evidence>
<evidence type="ECO:0000269" key="3">
    <source>
    </source>
</evidence>
<evidence type="ECO:0000269" key="4">
    <source>
    </source>
</evidence>
<evidence type="ECO:0000269" key="5">
    <source>
    </source>
</evidence>
<evidence type="ECO:0000269" key="6">
    <source>
    </source>
</evidence>
<evidence type="ECO:0000305" key="7"/>
<name>EDC2_YEAST</name>
<protein>
    <recommendedName>
        <fullName>Enhancer of mRNA-decapping protein 2</fullName>
    </recommendedName>
</protein>
<accession>P40023</accession>
<accession>D3DLT4</accession>
<gene>
    <name type="primary">EDC2</name>
    <name type="ordered locus">YER035W</name>
</gene>
<proteinExistence type="evidence at protein level"/>
<reference key="1">
    <citation type="journal article" date="1997" name="Nature">
        <title>The nucleotide sequence of Saccharomyces cerevisiae chromosome V.</title>
        <authorList>
            <person name="Dietrich F.S."/>
            <person name="Mulligan J.T."/>
            <person name="Hennessy K.M."/>
            <person name="Yelton M.A."/>
            <person name="Allen E."/>
            <person name="Araujo R."/>
            <person name="Aviles E."/>
            <person name="Berno A."/>
            <person name="Brennan T."/>
            <person name="Carpenter J."/>
            <person name="Chen E."/>
            <person name="Cherry J.M."/>
            <person name="Chung E."/>
            <person name="Duncan M."/>
            <person name="Guzman E."/>
            <person name="Hartzell G."/>
            <person name="Hunicke-Smith S."/>
            <person name="Hyman R.W."/>
            <person name="Kayser A."/>
            <person name="Komp C."/>
            <person name="Lashkari D."/>
            <person name="Lew H."/>
            <person name="Lin D."/>
            <person name="Mosedale D."/>
            <person name="Nakahara K."/>
            <person name="Namath A."/>
            <person name="Norgren R."/>
            <person name="Oefner P."/>
            <person name="Oh C."/>
            <person name="Petel F.X."/>
            <person name="Roberts D."/>
            <person name="Sehl P."/>
            <person name="Schramm S."/>
            <person name="Shogren T."/>
            <person name="Smith V."/>
            <person name="Taylor P."/>
            <person name="Wei Y."/>
            <person name="Botstein D."/>
            <person name="Davis R.W."/>
        </authorList>
    </citation>
    <scope>NUCLEOTIDE SEQUENCE [LARGE SCALE GENOMIC DNA]</scope>
    <source>
        <strain>ATCC 204508 / S288c</strain>
    </source>
</reference>
<reference key="2">
    <citation type="journal article" date="2014" name="G3 (Bethesda)">
        <title>The reference genome sequence of Saccharomyces cerevisiae: Then and now.</title>
        <authorList>
            <person name="Engel S.R."/>
            <person name="Dietrich F.S."/>
            <person name="Fisk D.G."/>
            <person name="Binkley G."/>
            <person name="Balakrishnan R."/>
            <person name="Costanzo M.C."/>
            <person name="Dwight S.S."/>
            <person name="Hitz B.C."/>
            <person name="Karra K."/>
            <person name="Nash R.S."/>
            <person name="Weng S."/>
            <person name="Wong E.D."/>
            <person name="Lloyd P."/>
            <person name="Skrzypek M.S."/>
            <person name="Miyasato S.R."/>
            <person name="Simison M."/>
            <person name="Cherry J.M."/>
        </authorList>
    </citation>
    <scope>GENOME REANNOTATION</scope>
    <source>
        <strain>ATCC 204508 / S288c</strain>
    </source>
</reference>
<reference key="3">
    <citation type="journal article" date="2007" name="Genome Res.">
        <title>Approaching a complete repository of sequence-verified protein-encoding clones for Saccharomyces cerevisiae.</title>
        <authorList>
            <person name="Hu Y."/>
            <person name="Rolfs A."/>
            <person name="Bhullar B."/>
            <person name="Murthy T.V.S."/>
            <person name="Zhu C."/>
            <person name="Berger M.F."/>
            <person name="Camargo A.A."/>
            <person name="Kelley F."/>
            <person name="McCarron S."/>
            <person name="Jepson D."/>
            <person name="Richardson A."/>
            <person name="Raphael J."/>
            <person name="Moreira D."/>
            <person name="Taycher E."/>
            <person name="Zuo D."/>
            <person name="Mohr S."/>
            <person name="Kane M.F."/>
            <person name="Williamson J."/>
            <person name="Simpson A.J.G."/>
            <person name="Bulyk M.L."/>
            <person name="Harlow E."/>
            <person name="Marsischky G."/>
            <person name="Kolodner R.D."/>
            <person name="LaBaer J."/>
        </authorList>
    </citation>
    <scope>NUCLEOTIDE SEQUENCE [GENOMIC DNA]</scope>
    <source>
        <strain>ATCC 204508 / S288c</strain>
    </source>
</reference>
<reference key="4">
    <citation type="journal article" date="2001" name="Genetics">
        <title>Two related proteins, Edc1p and Edc2p, stimulate mRNA decapping in Saccharomyces cerevisiae.</title>
        <authorList>
            <person name="Dunckley T."/>
            <person name="Tucker M."/>
            <person name="Parker R."/>
        </authorList>
    </citation>
    <scope>FUNCTION</scope>
</reference>
<reference key="5">
    <citation type="journal article" date="2003" name="Nature">
        <title>Global analysis of protein localization in budding yeast.</title>
        <authorList>
            <person name="Huh W.-K."/>
            <person name="Falvo J.V."/>
            <person name="Gerke L.C."/>
            <person name="Carroll A.S."/>
            <person name="Howson R.W."/>
            <person name="Weissman J.S."/>
            <person name="O'Shea E.K."/>
        </authorList>
    </citation>
    <scope>SUBCELLULAR LOCATION [LARGE SCALE ANALYSIS]</scope>
</reference>
<reference key="6">
    <citation type="journal article" date="2003" name="Nature">
        <title>Global analysis of protein expression in yeast.</title>
        <authorList>
            <person name="Ghaemmaghami S."/>
            <person name="Huh W.-K."/>
            <person name="Bower K."/>
            <person name="Howson R.W."/>
            <person name="Belle A."/>
            <person name="Dephoure N."/>
            <person name="O'Shea E.K."/>
            <person name="Weissman J.S."/>
        </authorList>
    </citation>
    <scope>LEVEL OF PROTEIN EXPRESSION [LARGE SCALE ANALYSIS]</scope>
</reference>
<reference key="7">
    <citation type="journal article" date="2003" name="RNA">
        <title>Analysis of recombinant yeast decapping enzyme.</title>
        <authorList>
            <person name="Steiger M."/>
            <person name="Carr-Schmid A."/>
            <person name="Schwartz D.C."/>
            <person name="Kiledjian M."/>
            <person name="Parker R."/>
        </authorList>
    </citation>
    <scope>FUNCTION</scope>
</reference>
<reference key="8">
    <citation type="journal article" date="2003" name="RNA">
        <title>The enhancer of decapping proteins, Edc1p and Edc2p, bind RNA and stimulate the activity of the decapping enzyme.</title>
        <authorList>
            <person name="Schwartz D."/>
            <person name="Decker C.J."/>
            <person name="Parker R."/>
        </authorList>
    </citation>
    <scope>FUNCTION</scope>
</reference>
<comment type="function">
    <text evidence="2 3 4">mRNA-binding protein which stimulates mRNA decapping by DCP1 and DCP2.</text>
</comment>
<comment type="subcellular location">
    <subcellularLocation>
        <location evidence="5">Cytoplasm</location>
    </subcellularLocation>
    <subcellularLocation>
        <location evidence="5">Nucleus</location>
    </subcellularLocation>
</comment>
<comment type="miscellaneous">
    <text evidence="6">Present with 538 molecules/cell in log phase SD medium.</text>
</comment>
<comment type="similarity">
    <text evidence="7">Belongs to the EDC family.</text>
</comment>
<organism>
    <name type="scientific">Saccharomyces cerevisiae (strain ATCC 204508 / S288c)</name>
    <name type="common">Baker's yeast</name>
    <dbReference type="NCBI Taxonomy" id="559292"/>
    <lineage>
        <taxon>Eukaryota</taxon>
        <taxon>Fungi</taxon>
        <taxon>Dikarya</taxon>
        <taxon>Ascomycota</taxon>
        <taxon>Saccharomycotina</taxon>
        <taxon>Saccharomycetes</taxon>
        <taxon>Saccharomycetales</taxon>
        <taxon>Saccharomycetaceae</taxon>
        <taxon>Saccharomyces</taxon>
    </lineage>
</organism>
<keyword id="KW-0963">Cytoplasm</keyword>
<keyword id="KW-0507">mRNA processing</keyword>
<keyword id="KW-0866">Nonsense-mediated mRNA decay</keyword>
<keyword id="KW-0539">Nucleus</keyword>
<keyword id="KW-1185">Reference proteome</keyword>
<keyword id="KW-0694">RNA-binding</keyword>
<sequence length="145" mass="16071">MGSETKHSAKVKIVTRESPPSAKEHMRPTKTQILVPPTQSLPNGKKPNFGKSTKQRREPRERTSKTGHEDDKATMVTVNIDAFLHDKAPKKKSCKYKKKKTRQYQDRAAASIDSKPHVAGHTAFAGASFTTDIPHEAALPKPSFV</sequence>
<feature type="chain" id="PRO_0000202626" description="Enhancer of mRNA-decapping protein 2">
    <location>
        <begin position="1"/>
        <end position="145"/>
    </location>
</feature>
<feature type="region of interest" description="Disordered" evidence="1">
    <location>
        <begin position="1"/>
        <end position="74"/>
    </location>
</feature>
<feature type="region of interest" description="Disordered" evidence="1">
    <location>
        <begin position="89"/>
        <end position="115"/>
    </location>
</feature>
<feature type="compositionally biased region" description="Polar residues" evidence="1">
    <location>
        <begin position="29"/>
        <end position="42"/>
    </location>
</feature>
<feature type="compositionally biased region" description="Basic and acidic residues" evidence="1">
    <location>
        <begin position="55"/>
        <end position="73"/>
    </location>
</feature>
<feature type="compositionally biased region" description="Basic residues" evidence="1">
    <location>
        <begin position="89"/>
        <end position="102"/>
    </location>
</feature>